<reference key="1">
    <citation type="journal article" date="2009" name="Vaccine">
        <title>Whole genome sequence analysis of Mycobacterium bovis bacillus Calmette-Guerin (BCG) Tokyo 172: a comparative study of BCG vaccine substrains.</title>
        <authorList>
            <person name="Seki M."/>
            <person name="Honda I."/>
            <person name="Fujita I."/>
            <person name="Yano I."/>
            <person name="Yamamoto S."/>
            <person name="Koyama A."/>
        </authorList>
    </citation>
    <scope>NUCLEOTIDE SEQUENCE [LARGE SCALE GENOMIC DNA]</scope>
    <source>
        <strain>BCG / Tokyo 172 / ATCC 35737 / TMC 1019</strain>
    </source>
</reference>
<name>NUOB_MYCBT</name>
<sequence>MGLEEQLPGGILLSTVEKVAGYVRKNSLWPATFGLACCAIEMMATAGPRFDIARFGMERFSATPRQADLMIVAGRVSQKMAPVLRQIYDQMAEPKWVLAMGVCASSGGMFNNYAIVQGVDHVVPVDIYLPGCPPRPEMLLHAILKLHEKIQQMPLGINRERAIAEAEEAALLARPTIEMRGLLR</sequence>
<dbReference type="EC" id="7.1.1.-" evidence="1"/>
<dbReference type="EMBL" id="AP010918">
    <property type="protein sequence ID" value="BAH27442.1"/>
    <property type="molecule type" value="Genomic_DNA"/>
</dbReference>
<dbReference type="RefSeq" id="WP_003416420.1">
    <property type="nucleotide sequence ID" value="NZ_CP014566.1"/>
</dbReference>
<dbReference type="SMR" id="C1AGR3"/>
<dbReference type="KEGG" id="mbt:JTY_3164"/>
<dbReference type="HOGENOM" id="CLU_055737_7_3_11"/>
<dbReference type="GO" id="GO:0005886">
    <property type="term" value="C:plasma membrane"/>
    <property type="evidence" value="ECO:0007669"/>
    <property type="project" value="UniProtKB-SubCell"/>
</dbReference>
<dbReference type="GO" id="GO:0045271">
    <property type="term" value="C:respiratory chain complex I"/>
    <property type="evidence" value="ECO:0007669"/>
    <property type="project" value="TreeGrafter"/>
</dbReference>
<dbReference type="GO" id="GO:0051539">
    <property type="term" value="F:4 iron, 4 sulfur cluster binding"/>
    <property type="evidence" value="ECO:0007669"/>
    <property type="project" value="UniProtKB-KW"/>
</dbReference>
<dbReference type="GO" id="GO:0005506">
    <property type="term" value="F:iron ion binding"/>
    <property type="evidence" value="ECO:0007669"/>
    <property type="project" value="UniProtKB-UniRule"/>
</dbReference>
<dbReference type="GO" id="GO:0008137">
    <property type="term" value="F:NADH dehydrogenase (ubiquinone) activity"/>
    <property type="evidence" value="ECO:0007669"/>
    <property type="project" value="InterPro"/>
</dbReference>
<dbReference type="GO" id="GO:0050136">
    <property type="term" value="F:NADH:ubiquinone reductase (non-electrogenic) activity"/>
    <property type="evidence" value="ECO:0007669"/>
    <property type="project" value="UniProtKB-UniRule"/>
</dbReference>
<dbReference type="GO" id="GO:0048038">
    <property type="term" value="F:quinone binding"/>
    <property type="evidence" value="ECO:0007669"/>
    <property type="project" value="UniProtKB-KW"/>
</dbReference>
<dbReference type="GO" id="GO:0009060">
    <property type="term" value="P:aerobic respiration"/>
    <property type="evidence" value="ECO:0007669"/>
    <property type="project" value="TreeGrafter"/>
</dbReference>
<dbReference type="GO" id="GO:0015990">
    <property type="term" value="P:electron transport coupled proton transport"/>
    <property type="evidence" value="ECO:0007669"/>
    <property type="project" value="TreeGrafter"/>
</dbReference>
<dbReference type="FunFam" id="3.40.50.12280:FF:000004">
    <property type="entry name" value="NADH-quinone oxidoreductase subunit B"/>
    <property type="match status" value="1"/>
</dbReference>
<dbReference type="Gene3D" id="3.40.50.12280">
    <property type="match status" value="1"/>
</dbReference>
<dbReference type="HAMAP" id="MF_01356">
    <property type="entry name" value="NDH1_NuoB"/>
    <property type="match status" value="1"/>
</dbReference>
<dbReference type="InterPro" id="IPR006137">
    <property type="entry name" value="NADH_UbQ_OxRdtase-like_20kDa"/>
</dbReference>
<dbReference type="InterPro" id="IPR006138">
    <property type="entry name" value="NADH_UQ_OxRdtase_20Kd_su"/>
</dbReference>
<dbReference type="NCBIfam" id="TIGR01957">
    <property type="entry name" value="nuoB_fam"/>
    <property type="match status" value="1"/>
</dbReference>
<dbReference type="NCBIfam" id="NF005012">
    <property type="entry name" value="PRK06411.1"/>
    <property type="match status" value="1"/>
</dbReference>
<dbReference type="PANTHER" id="PTHR11995">
    <property type="entry name" value="NADH DEHYDROGENASE"/>
    <property type="match status" value="1"/>
</dbReference>
<dbReference type="PANTHER" id="PTHR11995:SF14">
    <property type="entry name" value="NADH DEHYDROGENASE [UBIQUINONE] IRON-SULFUR PROTEIN 7, MITOCHONDRIAL"/>
    <property type="match status" value="1"/>
</dbReference>
<dbReference type="Pfam" id="PF01058">
    <property type="entry name" value="Oxidored_q6"/>
    <property type="match status" value="1"/>
</dbReference>
<dbReference type="SUPFAM" id="SSF56770">
    <property type="entry name" value="HydA/Nqo6-like"/>
    <property type="match status" value="1"/>
</dbReference>
<dbReference type="PROSITE" id="PS01150">
    <property type="entry name" value="COMPLEX1_20K"/>
    <property type="match status" value="1"/>
</dbReference>
<protein>
    <recommendedName>
        <fullName evidence="1">NADH-quinone oxidoreductase subunit B</fullName>
        <ecNumber evidence="1">7.1.1.-</ecNumber>
    </recommendedName>
    <alternativeName>
        <fullName evidence="1">NADH dehydrogenase I subunit B</fullName>
    </alternativeName>
    <alternativeName>
        <fullName evidence="1">NDH-1 subunit B</fullName>
    </alternativeName>
</protein>
<accession>C1AGR3</accession>
<gene>
    <name evidence="1" type="primary">nuoB</name>
    <name type="ordered locus">JTY_3164</name>
</gene>
<comment type="function">
    <text evidence="1">NDH-1 shuttles electrons from NADH, via FMN and iron-sulfur (Fe-S) centers, to quinones in the respiratory chain. The immediate electron acceptor for the enzyme in this species is believed to be a menaquinone. Couples the redox reaction to proton translocation (for every two electrons transferred, four hydrogen ions are translocated across the cytoplasmic membrane), and thus conserves the redox energy in a proton gradient.</text>
</comment>
<comment type="catalytic activity">
    <reaction evidence="1">
        <text>a quinone + NADH + 5 H(+)(in) = a quinol + NAD(+) + 4 H(+)(out)</text>
        <dbReference type="Rhea" id="RHEA:57888"/>
        <dbReference type="ChEBI" id="CHEBI:15378"/>
        <dbReference type="ChEBI" id="CHEBI:24646"/>
        <dbReference type="ChEBI" id="CHEBI:57540"/>
        <dbReference type="ChEBI" id="CHEBI:57945"/>
        <dbReference type="ChEBI" id="CHEBI:132124"/>
    </reaction>
</comment>
<comment type="cofactor">
    <cofactor evidence="1">
        <name>[4Fe-4S] cluster</name>
        <dbReference type="ChEBI" id="CHEBI:49883"/>
    </cofactor>
    <text evidence="1">Binds 1 [4Fe-4S] cluster.</text>
</comment>
<comment type="subunit">
    <text evidence="1">NDH-1 is composed of 14 different subunits. Subunits NuoB, C, D, E, F, and G constitute the peripheral sector of the complex.</text>
</comment>
<comment type="subcellular location">
    <subcellularLocation>
        <location evidence="1">Cell membrane</location>
        <topology evidence="1">Peripheral membrane protein</topology>
        <orientation evidence="1">Cytoplasmic side</orientation>
    </subcellularLocation>
</comment>
<comment type="similarity">
    <text evidence="1">Belongs to the complex I 20 kDa subunit family.</text>
</comment>
<organism>
    <name type="scientific">Mycobacterium bovis (strain BCG / Tokyo 172 / ATCC 35737 / TMC 1019)</name>
    <dbReference type="NCBI Taxonomy" id="561275"/>
    <lineage>
        <taxon>Bacteria</taxon>
        <taxon>Bacillati</taxon>
        <taxon>Actinomycetota</taxon>
        <taxon>Actinomycetes</taxon>
        <taxon>Mycobacteriales</taxon>
        <taxon>Mycobacteriaceae</taxon>
        <taxon>Mycobacterium</taxon>
        <taxon>Mycobacterium tuberculosis complex</taxon>
    </lineage>
</organism>
<keyword id="KW-0004">4Fe-4S</keyword>
<keyword id="KW-1003">Cell membrane</keyword>
<keyword id="KW-0408">Iron</keyword>
<keyword id="KW-0411">Iron-sulfur</keyword>
<keyword id="KW-0472">Membrane</keyword>
<keyword id="KW-0479">Metal-binding</keyword>
<keyword id="KW-0520">NAD</keyword>
<keyword id="KW-0874">Quinone</keyword>
<keyword id="KW-1278">Translocase</keyword>
<keyword id="KW-0813">Transport</keyword>
<feature type="chain" id="PRO_1000166660" description="NADH-quinone oxidoreductase subunit B">
    <location>
        <begin position="1"/>
        <end position="184"/>
    </location>
</feature>
<feature type="binding site" evidence="1">
    <location>
        <position position="37"/>
    </location>
    <ligand>
        <name>[4Fe-4S] cluster</name>
        <dbReference type="ChEBI" id="CHEBI:49883"/>
    </ligand>
</feature>
<feature type="binding site" evidence="1">
    <location>
        <position position="38"/>
    </location>
    <ligand>
        <name>[4Fe-4S] cluster</name>
        <dbReference type="ChEBI" id="CHEBI:49883"/>
    </ligand>
</feature>
<feature type="binding site" evidence="1">
    <location>
        <position position="103"/>
    </location>
    <ligand>
        <name>[4Fe-4S] cluster</name>
        <dbReference type="ChEBI" id="CHEBI:49883"/>
    </ligand>
</feature>
<feature type="binding site" evidence="1">
    <location>
        <position position="132"/>
    </location>
    <ligand>
        <name>[4Fe-4S] cluster</name>
        <dbReference type="ChEBI" id="CHEBI:49883"/>
    </ligand>
</feature>
<proteinExistence type="inferred from homology"/>
<evidence type="ECO:0000255" key="1">
    <source>
        <dbReference type="HAMAP-Rule" id="MF_01356"/>
    </source>
</evidence>